<sequence>MKKGINRVVLVGTGAVGCSYAYSMINQGVAEEFVLVDVNEAKAEGEAMDLSHAVPFSPSPTKVWSGSYADCKDADLVVITAGLPQKPGETRLDLVEKNTKIFKQIVRGIMDSGFDGIFLIATNPVDILTYVTWKESGLPKERVIGSGTTLDSARFRYMLGDYLDVDPRNVHAYIVGEHGDTELPVWSHATIGVQKLETILANNEQYKQEDLDKIFENVRDAAYQVIERKGATYYGIGMSLLRVTKAILNNENSVLTVSAYLEGQYGEKDAYVGVPAVINREGVREIVELELNEDEKAKFAHSVKVLKETMAPVL</sequence>
<proteinExistence type="inferred from homology"/>
<evidence type="ECO:0000255" key="1">
    <source>
        <dbReference type="HAMAP-Rule" id="MF_00488"/>
    </source>
</evidence>
<dbReference type="EC" id="1.1.1.27" evidence="1"/>
<dbReference type="EMBL" id="AE016877">
    <property type="protein sequence ID" value="AAP11769.1"/>
    <property type="molecule type" value="Genomic_DNA"/>
</dbReference>
<dbReference type="RefSeq" id="NP_834568.1">
    <property type="nucleotide sequence ID" value="NC_004722.1"/>
</dbReference>
<dbReference type="RefSeq" id="WP_000715345.1">
    <property type="nucleotide sequence ID" value="NC_004722.1"/>
</dbReference>
<dbReference type="SMR" id="Q816G3"/>
<dbReference type="STRING" id="226900.BC_4870"/>
<dbReference type="KEGG" id="bce:BC4870"/>
<dbReference type="PATRIC" id="fig|226900.8.peg.5043"/>
<dbReference type="HOGENOM" id="CLU_045401_1_1_9"/>
<dbReference type="UniPathway" id="UPA00554">
    <property type="reaction ID" value="UER00611"/>
</dbReference>
<dbReference type="Proteomes" id="UP000001417">
    <property type="component" value="Chromosome"/>
</dbReference>
<dbReference type="GO" id="GO:0005737">
    <property type="term" value="C:cytoplasm"/>
    <property type="evidence" value="ECO:0007669"/>
    <property type="project" value="UniProtKB-SubCell"/>
</dbReference>
<dbReference type="GO" id="GO:0004459">
    <property type="term" value="F:L-lactate dehydrogenase activity"/>
    <property type="evidence" value="ECO:0000318"/>
    <property type="project" value="GO_Central"/>
</dbReference>
<dbReference type="GO" id="GO:0006096">
    <property type="term" value="P:glycolytic process"/>
    <property type="evidence" value="ECO:0007669"/>
    <property type="project" value="UniProtKB-UniRule"/>
</dbReference>
<dbReference type="GO" id="GO:0006089">
    <property type="term" value="P:lactate metabolic process"/>
    <property type="evidence" value="ECO:0000318"/>
    <property type="project" value="GO_Central"/>
</dbReference>
<dbReference type="GO" id="GO:0006090">
    <property type="term" value="P:pyruvate metabolic process"/>
    <property type="evidence" value="ECO:0000318"/>
    <property type="project" value="GO_Central"/>
</dbReference>
<dbReference type="CDD" id="cd05291">
    <property type="entry name" value="HicDH_like"/>
    <property type="match status" value="1"/>
</dbReference>
<dbReference type="FunFam" id="3.90.110.10:FF:000005">
    <property type="entry name" value="L-lactate dehydrogenase"/>
    <property type="match status" value="1"/>
</dbReference>
<dbReference type="FunFam" id="3.40.50.720:FF:000018">
    <property type="entry name" value="Malate dehydrogenase"/>
    <property type="match status" value="1"/>
</dbReference>
<dbReference type="Gene3D" id="3.90.110.10">
    <property type="entry name" value="Lactate dehydrogenase/glycoside hydrolase, family 4, C-terminal"/>
    <property type="match status" value="1"/>
</dbReference>
<dbReference type="Gene3D" id="3.40.50.720">
    <property type="entry name" value="NAD(P)-binding Rossmann-like Domain"/>
    <property type="match status" value="1"/>
</dbReference>
<dbReference type="HAMAP" id="MF_00488">
    <property type="entry name" value="Lactate_dehydrog"/>
    <property type="match status" value="1"/>
</dbReference>
<dbReference type="InterPro" id="IPR001557">
    <property type="entry name" value="L-lactate/malate_DH"/>
</dbReference>
<dbReference type="InterPro" id="IPR011304">
    <property type="entry name" value="L-lactate_DH"/>
</dbReference>
<dbReference type="InterPro" id="IPR018177">
    <property type="entry name" value="L-lactate_DH_AS"/>
</dbReference>
<dbReference type="InterPro" id="IPR022383">
    <property type="entry name" value="Lactate/malate_DH_C"/>
</dbReference>
<dbReference type="InterPro" id="IPR001236">
    <property type="entry name" value="Lactate/malate_DH_N"/>
</dbReference>
<dbReference type="InterPro" id="IPR015955">
    <property type="entry name" value="Lactate_DH/Glyco_Ohase_4_C"/>
</dbReference>
<dbReference type="InterPro" id="IPR036291">
    <property type="entry name" value="NAD(P)-bd_dom_sf"/>
</dbReference>
<dbReference type="NCBIfam" id="TIGR01771">
    <property type="entry name" value="L-LDH-NAD"/>
    <property type="match status" value="1"/>
</dbReference>
<dbReference type="NCBIfam" id="NF000824">
    <property type="entry name" value="PRK00066.1"/>
    <property type="match status" value="1"/>
</dbReference>
<dbReference type="NCBIfam" id="NF004863">
    <property type="entry name" value="PRK06223.1"/>
    <property type="match status" value="1"/>
</dbReference>
<dbReference type="PANTHER" id="PTHR43128">
    <property type="entry name" value="L-2-HYDROXYCARBOXYLATE DEHYDROGENASE (NAD(P)(+))"/>
    <property type="match status" value="1"/>
</dbReference>
<dbReference type="PANTHER" id="PTHR43128:SF16">
    <property type="entry name" value="L-LACTATE DEHYDROGENASE"/>
    <property type="match status" value="1"/>
</dbReference>
<dbReference type="Pfam" id="PF02866">
    <property type="entry name" value="Ldh_1_C"/>
    <property type="match status" value="1"/>
</dbReference>
<dbReference type="Pfam" id="PF00056">
    <property type="entry name" value="Ldh_1_N"/>
    <property type="match status" value="1"/>
</dbReference>
<dbReference type="PIRSF" id="PIRSF000102">
    <property type="entry name" value="Lac_mal_DH"/>
    <property type="match status" value="1"/>
</dbReference>
<dbReference type="PRINTS" id="PR00086">
    <property type="entry name" value="LLDHDRGNASE"/>
</dbReference>
<dbReference type="SUPFAM" id="SSF56327">
    <property type="entry name" value="LDH C-terminal domain-like"/>
    <property type="match status" value="1"/>
</dbReference>
<dbReference type="SUPFAM" id="SSF51735">
    <property type="entry name" value="NAD(P)-binding Rossmann-fold domains"/>
    <property type="match status" value="1"/>
</dbReference>
<dbReference type="PROSITE" id="PS00064">
    <property type="entry name" value="L_LDH"/>
    <property type="match status" value="1"/>
</dbReference>
<accession>Q816G3</accession>
<comment type="function">
    <text evidence="1">Catalyzes the conversion of lactate to pyruvate.</text>
</comment>
<comment type="catalytic activity">
    <reaction evidence="1">
        <text>(S)-lactate + NAD(+) = pyruvate + NADH + H(+)</text>
        <dbReference type="Rhea" id="RHEA:23444"/>
        <dbReference type="ChEBI" id="CHEBI:15361"/>
        <dbReference type="ChEBI" id="CHEBI:15378"/>
        <dbReference type="ChEBI" id="CHEBI:16651"/>
        <dbReference type="ChEBI" id="CHEBI:57540"/>
        <dbReference type="ChEBI" id="CHEBI:57945"/>
        <dbReference type="EC" id="1.1.1.27"/>
    </reaction>
</comment>
<comment type="activity regulation">
    <text evidence="1">Allosterically activated by fructose 1,6-bisphosphate (FBP).</text>
</comment>
<comment type="pathway">
    <text evidence="1">Fermentation; pyruvate fermentation to lactate; (S)-lactate from pyruvate: step 1/1.</text>
</comment>
<comment type="subunit">
    <text evidence="1">Homotetramer.</text>
</comment>
<comment type="subcellular location">
    <subcellularLocation>
        <location evidence="1">Cytoplasm</location>
    </subcellularLocation>
</comment>
<comment type="similarity">
    <text evidence="1">Belongs to the LDH/MDH superfamily. LDH family.</text>
</comment>
<feature type="chain" id="PRO_0000168322" description="L-lactate dehydrogenase 2">
    <location>
        <begin position="1"/>
        <end position="314"/>
    </location>
</feature>
<feature type="active site" description="Proton acceptor" evidence="1">
    <location>
        <position position="178"/>
    </location>
</feature>
<feature type="binding site" evidence="1">
    <location>
        <position position="16"/>
    </location>
    <ligand>
        <name>NAD(+)</name>
        <dbReference type="ChEBI" id="CHEBI:57540"/>
    </ligand>
</feature>
<feature type="binding site" evidence="1">
    <location>
        <position position="37"/>
    </location>
    <ligand>
        <name>NAD(+)</name>
        <dbReference type="ChEBI" id="CHEBI:57540"/>
    </ligand>
</feature>
<feature type="binding site" evidence="1">
    <location>
        <position position="42"/>
    </location>
    <ligand>
        <name>NAD(+)</name>
        <dbReference type="ChEBI" id="CHEBI:57540"/>
    </ligand>
</feature>
<feature type="binding site" evidence="1">
    <location>
        <position position="68"/>
    </location>
    <ligand>
        <name>NAD(+)</name>
        <dbReference type="ChEBI" id="CHEBI:57540"/>
    </ligand>
</feature>
<feature type="binding site" evidence="1">
    <location>
        <begin position="82"/>
        <end position="83"/>
    </location>
    <ligand>
        <name>NAD(+)</name>
        <dbReference type="ChEBI" id="CHEBI:57540"/>
    </ligand>
</feature>
<feature type="binding site" evidence="1">
    <location>
        <position position="85"/>
    </location>
    <ligand>
        <name>substrate</name>
    </ligand>
</feature>
<feature type="binding site" evidence="1">
    <location>
        <position position="91"/>
    </location>
    <ligand>
        <name>substrate</name>
    </ligand>
</feature>
<feature type="binding site" evidence="1">
    <location>
        <begin position="121"/>
        <end position="123"/>
    </location>
    <ligand>
        <name>NAD(+)</name>
        <dbReference type="ChEBI" id="CHEBI:57540"/>
    </ligand>
</feature>
<feature type="binding site" evidence="1">
    <location>
        <begin position="123"/>
        <end position="126"/>
    </location>
    <ligand>
        <name>substrate</name>
    </ligand>
</feature>
<feature type="binding site" evidence="1">
    <location>
        <position position="146"/>
    </location>
    <ligand>
        <name>NAD(+)</name>
        <dbReference type="ChEBI" id="CHEBI:57540"/>
    </ligand>
</feature>
<feature type="binding site" evidence="1">
    <location>
        <begin position="151"/>
        <end position="154"/>
    </location>
    <ligand>
        <name>substrate</name>
    </ligand>
</feature>
<feature type="binding site" evidence="1">
    <location>
        <position position="156"/>
    </location>
    <ligand>
        <name>beta-D-fructose 1,6-bisphosphate</name>
        <dbReference type="ChEBI" id="CHEBI:32966"/>
        <note>allosteric activator</note>
    </ligand>
</feature>
<feature type="binding site" evidence="1">
    <location>
        <position position="171"/>
    </location>
    <ligand>
        <name>beta-D-fructose 1,6-bisphosphate</name>
        <dbReference type="ChEBI" id="CHEBI:32966"/>
        <note>allosteric activator</note>
    </ligand>
</feature>
<feature type="binding site" evidence="1">
    <location>
        <position position="232"/>
    </location>
    <ligand>
        <name>substrate</name>
    </ligand>
</feature>
<feature type="modified residue" description="Phosphotyrosine" evidence="1">
    <location>
        <position position="223"/>
    </location>
</feature>
<name>LDH2_BACCR</name>
<keyword id="KW-0021">Allosteric enzyme</keyword>
<keyword id="KW-0963">Cytoplasm</keyword>
<keyword id="KW-0520">NAD</keyword>
<keyword id="KW-0560">Oxidoreductase</keyword>
<keyword id="KW-0597">Phosphoprotein</keyword>
<keyword id="KW-1185">Reference proteome</keyword>
<reference key="1">
    <citation type="journal article" date="2003" name="Nature">
        <title>Genome sequence of Bacillus cereus and comparative analysis with Bacillus anthracis.</title>
        <authorList>
            <person name="Ivanova N."/>
            <person name="Sorokin A."/>
            <person name="Anderson I."/>
            <person name="Galleron N."/>
            <person name="Candelon B."/>
            <person name="Kapatral V."/>
            <person name="Bhattacharyya A."/>
            <person name="Reznik G."/>
            <person name="Mikhailova N."/>
            <person name="Lapidus A."/>
            <person name="Chu L."/>
            <person name="Mazur M."/>
            <person name="Goltsman E."/>
            <person name="Larsen N."/>
            <person name="D'Souza M."/>
            <person name="Walunas T."/>
            <person name="Grechkin Y."/>
            <person name="Pusch G."/>
            <person name="Haselkorn R."/>
            <person name="Fonstein M."/>
            <person name="Ehrlich S.D."/>
            <person name="Overbeek R."/>
            <person name="Kyrpides N.C."/>
        </authorList>
    </citation>
    <scope>NUCLEOTIDE SEQUENCE [LARGE SCALE GENOMIC DNA]</scope>
    <source>
        <strain>ATCC 14579 / DSM 31 / CCUG 7414 / JCM 2152 / NBRC 15305 / NCIMB 9373 / NCTC 2599 / NRRL B-3711</strain>
    </source>
</reference>
<organism>
    <name type="scientific">Bacillus cereus (strain ATCC 14579 / DSM 31 / CCUG 7414 / JCM 2152 / NBRC 15305 / NCIMB 9373 / NCTC 2599 / NRRL B-3711)</name>
    <dbReference type="NCBI Taxonomy" id="226900"/>
    <lineage>
        <taxon>Bacteria</taxon>
        <taxon>Bacillati</taxon>
        <taxon>Bacillota</taxon>
        <taxon>Bacilli</taxon>
        <taxon>Bacillales</taxon>
        <taxon>Bacillaceae</taxon>
        <taxon>Bacillus</taxon>
        <taxon>Bacillus cereus group</taxon>
    </lineage>
</organism>
<protein>
    <recommendedName>
        <fullName evidence="1">L-lactate dehydrogenase 2</fullName>
        <shortName evidence="1">L-LDH 2</shortName>
        <ecNumber evidence="1">1.1.1.27</ecNumber>
    </recommendedName>
</protein>
<gene>
    <name evidence="1" type="primary">ldh2</name>
    <name type="ordered locus">BC_4870</name>
</gene>